<protein>
    <recommendedName>
        <fullName>Transcriptional repressor TUP1</fullName>
    </recommendedName>
</protein>
<sequence length="511" mass="57503">MYPQRTQHQQRLTELLDAIKTEFDYASNEASSFKKVQEDYDSKYQQQAAEMQQIRQTVYDLELAHRKIKEAYEEEILRLKNELDTRDRQMKNGFQQQQQQQQQQQQQQQQQQQIVAPPAVPPAPPTPVTSLSVIDKSQYIVNPTQRANHVKEIPPFLQDLDIAKANPEFKKQHLEYYVLYNPAFSKDLDIDMVHSLDHSSVVCCVRFSRDGKFIATGCNKTTQVFNVTTGELVAKLIDESSNENKDDNTTASGDLYIRSVCFSPDGKLLATGAEDKLIRIWDLSTKRIIKILRGHEQDIYSLDFFPDGDRLVSGSGDRSVRIWDLRTSQCSLTLSIEDGVTTVAVSPDGKLIAAGSLDRTVRVWDSTTGFLVERLDSGNENGNGHEDSVYSVAFSNNGEQIASGSLDRTVKLWHLEGKSDKKSTCEVTYIGHKDFVLSVCCTPDNEYILSGSKDRGVIFWDQASGNPLLMLQGHRNSVISVAVSLNSKGTEGIFATGSGDCKARIWKWTKK</sequence>
<accession>C4YFX2</accession>
<accession>P56093</accession>
<accession>Q5AB65</accession>
<evidence type="ECO:0000256" key="1">
    <source>
        <dbReference type="SAM" id="MobiDB-lite"/>
    </source>
</evidence>
<evidence type="ECO:0000305" key="2"/>
<name>TUP1_CANAW</name>
<keyword id="KW-0677">Repeat</keyword>
<keyword id="KW-0678">Repressor</keyword>
<keyword id="KW-0804">Transcription</keyword>
<keyword id="KW-0805">Transcription regulation</keyword>
<keyword id="KW-0853">WD repeat</keyword>
<gene>
    <name type="primary">TUP1</name>
    <name type="synonym">CHP1</name>
    <name type="ORF">CAWG_01360</name>
</gene>
<comment type="function">
    <text>Represses transcription by RNA polymerase II. Represses genes responsible for initiating filamentous growth and this repression is lifted under inducing environmental conditions.</text>
</comment>
<comment type="sequence caution" evidence="2">
    <conflict type="erroneous initiation">
        <sequence resource="EMBL-CDS" id="AAB63195"/>
    </conflict>
    <text>Extended N-terminus.</text>
</comment>
<reference key="1">
    <citation type="journal article" date="1997" name="Science">
        <title>Control of filament formation in Candida albicans by the transcriptional repressor TUP1.</title>
        <authorList>
            <person name="Braun B.R."/>
            <person name="Johnson A.D."/>
        </authorList>
    </citation>
    <scope>NUCLEOTIDE SEQUENCE [GENOMIC DNA]</scope>
    <source>
        <strain>WO-1</strain>
    </source>
</reference>
<reference key="2">
    <citation type="journal article" date="2009" name="Nature">
        <title>Evolution of pathogenicity and sexual reproduction in eight Candida genomes.</title>
        <authorList>
            <person name="Butler G."/>
            <person name="Rasmussen M.D."/>
            <person name="Lin M.F."/>
            <person name="Santos M.A.S."/>
            <person name="Sakthikumar S."/>
            <person name="Munro C.A."/>
            <person name="Rheinbay E."/>
            <person name="Grabherr M."/>
            <person name="Forche A."/>
            <person name="Reedy J.L."/>
            <person name="Agrafioti I."/>
            <person name="Arnaud M.B."/>
            <person name="Bates S."/>
            <person name="Brown A.J.P."/>
            <person name="Brunke S."/>
            <person name="Costanzo M.C."/>
            <person name="Fitzpatrick D.A."/>
            <person name="de Groot P.W.J."/>
            <person name="Harris D."/>
            <person name="Hoyer L.L."/>
            <person name="Hube B."/>
            <person name="Klis F.M."/>
            <person name="Kodira C."/>
            <person name="Lennard N."/>
            <person name="Logue M.E."/>
            <person name="Martin R."/>
            <person name="Neiman A.M."/>
            <person name="Nikolaou E."/>
            <person name="Quail M.A."/>
            <person name="Quinn J."/>
            <person name="Santos M.C."/>
            <person name="Schmitzberger F.F."/>
            <person name="Sherlock G."/>
            <person name="Shah P."/>
            <person name="Silverstein K.A.T."/>
            <person name="Skrzypek M.S."/>
            <person name="Soll D."/>
            <person name="Staggs R."/>
            <person name="Stansfield I."/>
            <person name="Stumpf M.P.H."/>
            <person name="Sudbery P.E."/>
            <person name="Srikantha T."/>
            <person name="Zeng Q."/>
            <person name="Berman J."/>
            <person name="Berriman M."/>
            <person name="Heitman J."/>
            <person name="Gow N.A.R."/>
            <person name="Lorenz M.C."/>
            <person name="Birren B.W."/>
            <person name="Kellis M."/>
            <person name="Cuomo C.A."/>
        </authorList>
    </citation>
    <scope>NUCLEOTIDE SEQUENCE [LARGE SCALE GENOMIC DNA]</scope>
    <source>
        <strain>WO-1</strain>
    </source>
</reference>
<dbReference type="EMBL" id="AF005741">
    <property type="protein sequence ID" value="AAB63195.1"/>
    <property type="status" value="ALT_INIT"/>
    <property type="molecule type" value="Genomic_DNA"/>
</dbReference>
<dbReference type="EMBL" id="CH672346">
    <property type="protein sequence ID" value="EEQ43123.1"/>
    <property type="molecule type" value="Genomic_DNA"/>
</dbReference>
<dbReference type="SMR" id="C4YFX2"/>
<dbReference type="PaxDb" id="5476-C4YFX2"/>
<dbReference type="VEuPathDB" id="FungiDB:CAWG_01360"/>
<dbReference type="HOGENOM" id="CLU_000288_57_23_1"/>
<dbReference type="OMA" id="HYLVPYN"/>
<dbReference type="OrthoDB" id="17017at766764"/>
<dbReference type="PHI-base" id="PHI:211"/>
<dbReference type="PHI-base" id="PHI:6806"/>
<dbReference type="Proteomes" id="UP000001429">
    <property type="component" value="Chromosome 1, Supercontig 1.1"/>
</dbReference>
<dbReference type="CDD" id="cd00200">
    <property type="entry name" value="WD40"/>
    <property type="match status" value="1"/>
</dbReference>
<dbReference type="FunFam" id="2.130.10.10:FF:000111">
    <property type="entry name" value="Transcriptional repressor rco-1"/>
    <property type="match status" value="1"/>
</dbReference>
<dbReference type="FunFam" id="1.20.5.340:FF:000043">
    <property type="entry name" value="Transcriptional repressor TUP1"/>
    <property type="match status" value="1"/>
</dbReference>
<dbReference type="Gene3D" id="1.20.5.340">
    <property type="match status" value="1"/>
</dbReference>
<dbReference type="Gene3D" id="2.130.10.10">
    <property type="entry name" value="YVTN repeat-like/Quinoprotein amine dehydrogenase"/>
    <property type="match status" value="1"/>
</dbReference>
<dbReference type="InterPro" id="IPR020472">
    <property type="entry name" value="G-protein_beta_WD-40_rep"/>
</dbReference>
<dbReference type="InterPro" id="IPR001632">
    <property type="entry name" value="Gprotein_B"/>
</dbReference>
<dbReference type="InterPro" id="IPR013890">
    <property type="entry name" value="Tscrpt_rep_Tup1_N"/>
</dbReference>
<dbReference type="InterPro" id="IPR015943">
    <property type="entry name" value="WD40/YVTN_repeat-like_dom_sf"/>
</dbReference>
<dbReference type="InterPro" id="IPR019775">
    <property type="entry name" value="WD40_repeat_CS"/>
</dbReference>
<dbReference type="InterPro" id="IPR036322">
    <property type="entry name" value="WD40_repeat_dom_sf"/>
</dbReference>
<dbReference type="InterPro" id="IPR001680">
    <property type="entry name" value="WD40_rpt"/>
</dbReference>
<dbReference type="PANTHER" id="PTHR19848:SF8">
    <property type="entry name" value="F-BOX AND WD REPEAT DOMAIN CONTAINING 7"/>
    <property type="match status" value="1"/>
</dbReference>
<dbReference type="PANTHER" id="PTHR19848">
    <property type="entry name" value="WD40 REPEAT PROTEIN"/>
    <property type="match status" value="1"/>
</dbReference>
<dbReference type="Pfam" id="PF08581">
    <property type="entry name" value="Tup_N"/>
    <property type="match status" value="1"/>
</dbReference>
<dbReference type="Pfam" id="PF00400">
    <property type="entry name" value="WD40"/>
    <property type="match status" value="7"/>
</dbReference>
<dbReference type="PRINTS" id="PR00319">
    <property type="entry name" value="GPROTEINB"/>
</dbReference>
<dbReference type="PRINTS" id="PR00320">
    <property type="entry name" value="GPROTEINBRPT"/>
</dbReference>
<dbReference type="SMART" id="SM00320">
    <property type="entry name" value="WD40"/>
    <property type="match status" value="7"/>
</dbReference>
<dbReference type="SUPFAM" id="SSF50978">
    <property type="entry name" value="WD40 repeat-like"/>
    <property type="match status" value="1"/>
</dbReference>
<dbReference type="PROSITE" id="PS00678">
    <property type="entry name" value="WD_REPEATS_1"/>
    <property type="match status" value="3"/>
</dbReference>
<dbReference type="PROSITE" id="PS50082">
    <property type="entry name" value="WD_REPEATS_2"/>
    <property type="match status" value="6"/>
</dbReference>
<dbReference type="PROSITE" id="PS50294">
    <property type="entry name" value="WD_REPEATS_REGION"/>
    <property type="match status" value="1"/>
</dbReference>
<organism>
    <name type="scientific">Candida albicans (strain WO-1)</name>
    <name type="common">Yeast</name>
    <dbReference type="NCBI Taxonomy" id="294748"/>
    <lineage>
        <taxon>Eukaryota</taxon>
        <taxon>Fungi</taxon>
        <taxon>Dikarya</taxon>
        <taxon>Ascomycota</taxon>
        <taxon>Saccharomycotina</taxon>
        <taxon>Pichiomycetes</taxon>
        <taxon>Debaryomycetaceae</taxon>
        <taxon>Candida/Lodderomyces clade</taxon>
        <taxon>Candida</taxon>
    </lineage>
</organism>
<feature type="chain" id="PRO_0000413064" description="Transcriptional repressor TUP1">
    <location>
        <begin position="1"/>
        <end position="511"/>
    </location>
</feature>
<feature type="repeat" description="WD 1">
    <location>
        <begin position="197"/>
        <end position="237"/>
    </location>
</feature>
<feature type="repeat" description="WD 2">
    <location>
        <begin position="252"/>
        <end position="293"/>
    </location>
</feature>
<feature type="repeat" description="WD 3">
    <location>
        <begin position="294"/>
        <end position="333"/>
    </location>
</feature>
<feature type="repeat" description="WD 4">
    <location>
        <begin position="335"/>
        <end position="374"/>
    </location>
</feature>
<feature type="repeat" description="WD 5">
    <location>
        <begin position="384"/>
        <end position="423"/>
    </location>
</feature>
<feature type="repeat" description="WD 6">
    <location>
        <begin position="431"/>
        <end position="470"/>
    </location>
</feature>
<feature type="repeat" description="WD 7">
    <location>
        <begin position="473"/>
        <end position="511"/>
    </location>
</feature>
<feature type="region of interest" description="Disordered" evidence="1">
    <location>
        <begin position="90"/>
        <end position="128"/>
    </location>
</feature>
<feature type="compositionally biased region" description="Low complexity" evidence="1">
    <location>
        <begin position="95"/>
        <end position="117"/>
    </location>
</feature>
<feature type="compositionally biased region" description="Pro residues" evidence="1">
    <location>
        <begin position="118"/>
        <end position="127"/>
    </location>
</feature>
<feature type="sequence conflict" description="In Ref. 1; AAB63195." evidence="2" ref="1">
    <original>Q</original>
    <variation>QQ</variation>
    <location>
        <position position="113"/>
    </location>
</feature>
<feature type="sequence conflict" description="In Ref. 1; AAB63195." evidence="2" ref="1">
    <original>V</original>
    <variation>A</variation>
    <location>
        <position position="120"/>
    </location>
</feature>
<proteinExistence type="predicted"/>